<protein>
    <recommendedName>
        <fullName evidence="1">GTPase Der</fullName>
    </recommendedName>
    <alternativeName>
        <fullName evidence="1">GTP-binding protein EngA</fullName>
    </alternativeName>
</protein>
<proteinExistence type="inferred from homology"/>
<dbReference type="EMBL" id="CP001176">
    <property type="protein sequence ID" value="ACK59130.1"/>
    <property type="molecule type" value="Genomic_DNA"/>
</dbReference>
<dbReference type="RefSeq" id="WP_001125893.1">
    <property type="nucleotide sequence ID" value="NZ_VEHB01000003.1"/>
</dbReference>
<dbReference type="SMR" id="B7HHQ7"/>
<dbReference type="GeneID" id="93009536"/>
<dbReference type="KEGG" id="bcb:BCB4264_A1559"/>
<dbReference type="HOGENOM" id="CLU_016077_6_2_9"/>
<dbReference type="Proteomes" id="UP000007096">
    <property type="component" value="Chromosome"/>
</dbReference>
<dbReference type="GO" id="GO:0005525">
    <property type="term" value="F:GTP binding"/>
    <property type="evidence" value="ECO:0007669"/>
    <property type="project" value="UniProtKB-UniRule"/>
</dbReference>
<dbReference type="GO" id="GO:0043022">
    <property type="term" value="F:ribosome binding"/>
    <property type="evidence" value="ECO:0007669"/>
    <property type="project" value="TreeGrafter"/>
</dbReference>
<dbReference type="GO" id="GO:0042254">
    <property type="term" value="P:ribosome biogenesis"/>
    <property type="evidence" value="ECO:0007669"/>
    <property type="project" value="UniProtKB-KW"/>
</dbReference>
<dbReference type="CDD" id="cd01894">
    <property type="entry name" value="EngA1"/>
    <property type="match status" value="1"/>
</dbReference>
<dbReference type="CDD" id="cd01895">
    <property type="entry name" value="EngA2"/>
    <property type="match status" value="1"/>
</dbReference>
<dbReference type="FunFam" id="3.30.300.20:FF:000004">
    <property type="entry name" value="GTPase Der"/>
    <property type="match status" value="1"/>
</dbReference>
<dbReference type="FunFam" id="3.40.50.300:FF:000040">
    <property type="entry name" value="GTPase Der"/>
    <property type="match status" value="1"/>
</dbReference>
<dbReference type="FunFam" id="3.40.50.300:FF:000057">
    <property type="entry name" value="GTPase Der"/>
    <property type="match status" value="1"/>
</dbReference>
<dbReference type="Gene3D" id="3.30.300.20">
    <property type="match status" value="1"/>
</dbReference>
<dbReference type="Gene3D" id="3.40.50.300">
    <property type="entry name" value="P-loop containing nucleotide triphosphate hydrolases"/>
    <property type="match status" value="2"/>
</dbReference>
<dbReference type="HAMAP" id="MF_00195">
    <property type="entry name" value="GTPase_Der"/>
    <property type="match status" value="1"/>
</dbReference>
<dbReference type="InterPro" id="IPR031166">
    <property type="entry name" value="G_ENGA"/>
</dbReference>
<dbReference type="InterPro" id="IPR006073">
    <property type="entry name" value="GTP-bd"/>
</dbReference>
<dbReference type="InterPro" id="IPR016484">
    <property type="entry name" value="GTPase_Der"/>
</dbReference>
<dbReference type="InterPro" id="IPR032859">
    <property type="entry name" value="KH_dom-like"/>
</dbReference>
<dbReference type="InterPro" id="IPR015946">
    <property type="entry name" value="KH_dom-like_a/b"/>
</dbReference>
<dbReference type="InterPro" id="IPR027417">
    <property type="entry name" value="P-loop_NTPase"/>
</dbReference>
<dbReference type="InterPro" id="IPR005225">
    <property type="entry name" value="Small_GTP-bd"/>
</dbReference>
<dbReference type="NCBIfam" id="TIGR03594">
    <property type="entry name" value="GTPase_EngA"/>
    <property type="match status" value="1"/>
</dbReference>
<dbReference type="NCBIfam" id="TIGR00231">
    <property type="entry name" value="small_GTP"/>
    <property type="match status" value="2"/>
</dbReference>
<dbReference type="PANTHER" id="PTHR43834">
    <property type="entry name" value="GTPASE DER"/>
    <property type="match status" value="1"/>
</dbReference>
<dbReference type="PANTHER" id="PTHR43834:SF6">
    <property type="entry name" value="GTPASE DER"/>
    <property type="match status" value="1"/>
</dbReference>
<dbReference type="Pfam" id="PF14714">
    <property type="entry name" value="KH_dom-like"/>
    <property type="match status" value="1"/>
</dbReference>
<dbReference type="Pfam" id="PF01926">
    <property type="entry name" value="MMR_HSR1"/>
    <property type="match status" value="2"/>
</dbReference>
<dbReference type="PIRSF" id="PIRSF006485">
    <property type="entry name" value="GTP-binding_EngA"/>
    <property type="match status" value="1"/>
</dbReference>
<dbReference type="PRINTS" id="PR00326">
    <property type="entry name" value="GTP1OBG"/>
</dbReference>
<dbReference type="SUPFAM" id="SSF52540">
    <property type="entry name" value="P-loop containing nucleoside triphosphate hydrolases"/>
    <property type="match status" value="2"/>
</dbReference>
<dbReference type="PROSITE" id="PS51712">
    <property type="entry name" value="G_ENGA"/>
    <property type="match status" value="2"/>
</dbReference>
<keyword id="KW-0342">GTP-binding</keyword>
<keyword id="KW-0547">Nucleotide-binding</keyword>
<keyword id="KW-0677">Repeat</keyword>
<keyword id="KW-0690">Ribosome biogenesis</keyword>
<organism>
    <name type="scientific">Bacillus cereus (strain B4264)</name>
    <dbReference type="NCBI Taxonomy" id="405532"/>
    <lineage>
        <taxon>Bacteria</taxon>
        <taxon>Bacillati</taxon>
        <taxon>Bacillota</taxon>
        <taxon>Bacilli</taxon>
        <taxon>Bacillales</taxon>
        <taxon>Bacillaceae</taxon>
        <taxon>Bacillus</taxon>
        <taxon>Bacillus cereus group</taxon>
    </lineage>
</organism>
<name>DER_BACC4</name>
<reference key="1">
    <citation type="submission" date="2008-10" db="EMBL/GenBank/DDBJ databases">
        <title>Genome sequence of Bacillus cereus B4264.</title>
        <authorList>
            <person name="Dodson R.J."/>
            <person name="Durkin A.S."/>
            <person name="Rosovitz M.J."/>
            <person name="Rasko D.A."/>
            <person name="Hoffmaster A."/>
            <person name="Ravel J."/>
            <person name="Sutton G."/>
        </authorList>
    </citation>
    <scope>NUCLEOTIDE SEQUENCE [LARGE SCALE GENOMIC DNA]</scope>
    <source>
        <strain>B4264</strain>
    </source>
</reference>
<sequence>MPKPVIAIVGRPNVGKSTIFNRIVGERVSIVEDIPGVTRDRIYSAGEWLNHEFNIIDTGGIDIGDEPFLTQIRQQAEVAIDEADVIIFMTNGRDGVTAADEEVAKILYRSNKPVVLAVNKVDNPEMRSDIYDFYALGFGEPFPISGTHGLGLGDLLDEAAQHFPKIEEDGYDEDTIRFSLIGRPNVGKSSLVNALLGQERVIVSNVAGTTRDAVDTPYSKDGKDYVIIDTAGMRKKGKVYESTEKYSVLRALRAIERSDVVLVVLDGEEGIIEQDKKIAGYAHDSGRAVVIVVNKWDAVKKDEKTMKAFEENIRAHFQFLEYAPIVFLSAKTRKRTQTLIPVIDEVNESHSIRIQTNVLNDVIMDAVAMNPTPTHNGSRLKIFYATQVAVKPPTFVVFVNDPELLHFSYERFLKNRLRESFGFVGTPIHIIARARD</sequence>
<gene>
    <name evidence="1" type="primary">der</name>
    <name type="synonym">engA</name>
    <name type="ordered locus">BCB4264_A1559</name>
</gene>
<evidence type="ECO:0000255" key="1">
    <source>
        <dbReference type="HAMAP-Rule" id="MF_00195"/>
    </source>
</evidence>
<accession>B7HHQ7</accession>
<comment type="function">
    <text evidence="1">GTPase that plays an essential role in the late steps of ribosome biogenesis.</text>
</comment>
<comment type="subunit">
    <text evidence="1">Associates with the 50S ribosomal subunit.</text>
</comment>
<comment type="similarity">
    <text evidence="1">Belongs to the TRAFAC class TrmE-Era-EngA-EngB-Septin-like GTPase superfamily. EngA (Der) GTPase family.</text>
</comment>
<feature type="chain" id="PRO_1000118637" description="GTPase Der">
    <location>
        <begin position="1"/>
        <end position="436"/>
    </location>
</feature>
<feature type="domain" description="EngA-type G 1">
    <location>
        <begin position="4"/>
        <end position="167"/>
    </location>
</feature>
<feature type="domain" description="EngA-type G 2">
    <location>
        <begin position="176"/>
        <end position="351"/>
    </location>
</feature>
<feature type="domain" description="KH-like" evidence="1">
    <location>
        <begin position="352"/>
        <end position="436"/>
    </location>
</feature>
<feature type="binding site" evidence="1">
    <location>
        <begin position="10"/>
        <end position="17"/>
    </location>
    <ligand>
        <name>GTP</name>
        <dbReference type="ChEBI" id="CHEBI:37565"/>
        <label>1</label>
    </ligand>
</feature>
<feature type="binding site" evidence="1">
    <location>
        <begin position="57"/>
        <end position="61"/>
    </location>
    <ligand>
        <name>GTP</name>
        <dbReference type="ChEBI" id="CHEBI:37565"/>
        <label>1</label>
    </ligand>
</feature>
<feature type="binding site" evidence="1">
    <location>
        <begin position="119"/>
        <end position="122"/>
    </location>
    <ligand>
        <name>GTP</name>
        <dbReference type="ChEBI" id="CHEBI:37565"/>
        <label>1</label>
    </ligand>
</feature>
<feature type="binding site" evidence="1">
    <location>
        <begin position="182"/>
        <end position="189"/>
    </location>
    <ligand>
        <name>GTP</name>
        <dbReference type="ChEBI" id="CHEBI:37565"/>
        <label>2</label>
    </ligand>
</feature>
<feature type="binding site" evidence="1">
    <location>
        <begin position="229"/>
        <end position="233"/>
    </location>
    <ligand>
        <name>GTP</name>
        <dbReference type="ChEBI" id="CHEBI:37565"/>
        <label>2</label>
    </ligand>
</feature>
<feature type="binding site" evidence="1">
    <location>
        <begin position="294"/>
        <end position="297"/>
    </location>
    <ligand>
        <name>GTP</name>
        <dbReference type="ChEBI" id="CHEBI:37565"/>
        <label>2</label>
    </ligand>
</feature>